<accession>Q9GLX8</accession>
<dbReference type="EMBL" id="AB051422">
    <property type="protein sequence ID" value="BAB18462.1"/>
    <property type="molecule type" value="mRNA"/>
</dbReference>
<dbReference type="RefSeq" id="NP_999311.1">
    <property type="nucleotide sequence ID" value="NM_214146.1"/>
</dbReference>
<dbReference type="SMR" id="Q9GLX8"/>
<dbReference type="CORUM" id="Q9GLX8"/>
<dbReference type="FunCoup" id="Q9GLX8">
    <property type="interactions" value="522"/>
</dbReference>
<dbReference type="STRING" id="9823.ENSSSCP00000025411"/>
<dbReference type="GlyCosmos" id="Q9GLX8">
    <property type="glycosylation" value="3 sites, No reported glycans"/>
</dbReference>
<dbReference type="GlyGen" id="Q9GLX8">
    <property type="glycosylation" value="3 sites"/>
</dbReference>
<dbReference type="PaxDb" id="9823-ENSSSCP00000025411"/>
<dbReference type="GeneID" id="110255240"/>
<dbReference type="CTD" id="624"/>
<dbReference type="eggNOG" id="ENOG502QTX6">
    <property type="taxonomic scope" value="Eukaryota"/>
</dbReference>
<dbReference type="InParanoid" id="Q9GLX8"/>
<dbReference type="OrthoDB" id="6076970at2759"/>
<dbReference type="Proteomes" id="UP000008227">
    <property type="component" value="Unplaced"/>
</dbReference>
<dbReference type="Proteomes" id="UP000314985">
    <property type="component" value="Unplaced"/>
</dbReference>
<dbReference type="Proteomes" id="UP000694570">
    <property type="component" value="Unplaced"/>
</dbReference>
<dbReference type="Proteomes" id="UP000694571">
    <property type="component" value="Unplaced"/>
</dbReference>
<dbReference type="Proteomes" id="UP000694720">
    <property type="component" value="Unplaced"/>
</dbReference>
<dbReference type="Proteomes" id="UP000694722">
    <property type="component" value="Unplaced"/>
</dbReference>
<dbReference type="Proteomes" id="UP000694723">
    <property type="component" value="Unplaced"/>
</dbReference>
<dbReference type="Proteomes" id="UP000694724">
    <property type="component" value="Unplaced"/>
</dbReference>
<dbReference type="Proteomes" id="UP000694725">
    <property type="component" value="Unplaced"/>
</dbReference>
<dbReference type="Proteomes" id="UP000694726">
    <property type="component" value="Unplaced"/>
</dbReference>
<dbReference type="Proteomes" id="UP000694727">
    <property type="component" value="Unplaced"/>
</dbReference>
<dbReference type="Proteomes" id="UP000694728">
    <property type="component" value="Unplaced"/>
</dbReference>
<dbReference type="GO" id="GO:0005886">
    <property type="term" value="C:plasma membrane"/>
    <property type="evidence" value="ECO:0000318"/>
    <property type="project" value="GO_Central"/>
</dbReference>
<dbReference type="GO" id="GO:0004947">
    <property type="term" value="F:bradykinin receptor activity"/>
    <property type="evidence" value="ECO:0000318"/>
    <property type="project" value="GO_Central"/>
</dbReference>
<dbReference type="GO" id="GO:0007186">
    <property type="term" value="P:G protein-coupled receptor signaling pathway"/>
    <property type="evidence" value="ECO:0000318"/>
    <property type="project" value="GO_Central"/>
</dbReference>
<dbReference type="GO" id="GO:1900073">
    <property type="term" value="P:regulation of neuromuscular synaptic transmission"/>
    <property type="evidence" value="ECO:0000315"/>
    <property type="project" value="AgBase"/>
</dbReference>
<dbReference type="GO" id="GO:0014832">
    <property type="term" value="P:urinary bladder smooth muscle contraction"/>
    <property type="evidence" value="ECO:0000315"/>
    <property type="project" value="AgBase"/>
</dbReference>
<dbReference type="GO" id="GO:0042310">
    <property type="term" value="P:vasoconstriction"/>
    <property type="evidence" value="ECO:0007669"/>
    <property type="project" value="InterPro"/>
</dbReference>
<dbReference type="FunFam" id="1.20.1070.10:FF:000201">
    <property type="entry name" value="Bradykinin receptor B2"/>
    <property type="match status" value="1"/>
</dbReference>
<dbReference type="Gene3D" id="1.20.1070.10">
    <property type="entry name" value="Rhodopsin 7-helix transmembrane proteins"/>
    <property type="match status" value="1"/>
</dbReference>
<dbReference type="InterPro" id="IPR001504">
    <property type="entry name" value="Brdyknn_2_rcpt"/>
</dbReference>
<dbReference type="InterPro" id="IPR000496">
    <property type="entry name" value="Brdyknn_rcpt"/>
</dbReference>
<dbReference type="InterPro" id="IPR050119">
    <property type="entry name" value="CCR1-9-like"/>
</dbReference>
<dbReference type="InterPro" id="IPR000276">
    <property type="entry name" value="GPCR_Rhodpsn"/>
</dbReference>
<dbReference type="InterPro" id="IPR017452">
    <property type="entry name" value="GPCR_Rhodpsn_7TM"/>
</dbReference>
<dbReference type="PANTHER" id="PTHR10489:SF957">
    <property type="entry name" value="B2 BRADYKININ RECEPTOR"/>
    <property type="match status" value="1"/>
</dbReference>
<dbReference type="PANTHER" id="PTHR10489">
    <property type="entry name" value="CELL ADHESION MOLECULE"/>
    <property type="match status" value="1"/>
</dbReference>
<dbReference type="Pfam" id="PF00001">
    <property type="entry name" value="7tm_1"/>
    <property type="match status" value="1"/>
</dbReference>
<dbReference type="PRINTS" id="PR00425">
    <property type="entry name" value="BRADYKININR"/>
</dbReference>
<dbReference type="PRINTS" id="PR00994">
    <property type="entry name" value="BRADYKINNB2R"/>
</dbReference>
<dbReference type="PRINTS" id="PR00237">
    <property type="entry name" value="GPCRRHODOPSN"/>
</dbReference>
<dbReference type="SUPFAM" id="SSF81321">
    <property type="entry name" value="Family A G protein-coupled receptor-like"/>
    <property type="match status" value="1"/>
</dbReference>
<dbReference type="PROSITE" id="PS00237">
    <property type="entry name" value="G_PROTEIN_RECEP_F1_1"/>
    <property type="match status" value="1"/>
</dbReference>
<dbReference type="PROSITE" id="PS50262">
    <property type="entry name" value="G_PROTEIN_RECEP_F1_2"/>
    <property type="match status" value="1"/>
</dbReference>
<evidence type="ECO:0000250" key="1">
    <source>
        <dbReference type="UniProtKB" id="P25023"/>
    </source>
</evidence>
<evidence type="ECO:0000250" key="2">
    <source>
        <dbReference type="UniProtKB" id="P30411"/>
    </source>
</evidence>
<evidence type="ECO:0000255" key="3"/>
<evidence type="ECO:0000255" key="4">
    <source>
        <dbReference type="PROSITE-ProRule" id="PRU00521"/>
    </source>
</evidence>
<feature type="chain" id="PRO_0000069192" description="B2 bradykinin receptor">
    <location>
        <begin position="1"/>
        <end position="367"/>
    </location>
</feature>
<feature type="topological domain" description="Extracellular" evidence="3">
    <location>
        <begin position="1"/>
        <end position="36"/>
    </location>
</feature>
<feature type="transmembrane region" description="Helical; Name=1" evidence="3">
    <location>
        <begin position="37"/>
        <end position="60"/>
    </location>
</feature>
<feature type="topological domain" description="Cytoplasmic" evidence="3">
    <location>
        <begin position="61"/>
        <end position="69"/>
    </location>
</feature>
<feature type="transmembrane region" description="Helical; Name=2" evidence="3">
    <location>
        <begin position="70"/>
        <end position="94"/>
    </location>
</feature>
<feature type="topological domain" description="Extracellular" evidence="3">
    <location>
        <begin position="95"/>
        <end position="107"/>
    </location>
</feature>
<feature type="transmembrane region" description="Helical; Name=3" evidence="3">
    <location>
        <begin position="108"/>
        <end position="129"/>
    </location>
</feature>
<feature type="topological domain" description="Cytoplasmic" evidence="3">
    <location>
        <begin position="130"/>
        <end position="151"/>
    </location>
</feature>
<feature type="transmembrane region" description="Helical; Name=4" evidence="3">
    <location>
        <begin position="152"/>
        <end position="174"/>
    </location>
</feature>
<feature type="topological domain" description="Extracellular" evidence="3">
    <location>
        <begin position="175"/>
        <end position="197"/>
    </location>
</feature>
<feature type="transmembrane region" description="Helical; Name=5" evidence="3">
    <location>
        <begin position="198"/>
        <end position="224"/>
    </location>
</feature>
<feature type="topological domain" description="Cytoplasmic" evidence="3">
    <location>
        <begin position="225"/>
        <end position="243"/>
    </location>
</feature>
<feature type="transmembrane region" description="Helical; Name=6" evidence="3">
    <location>
        <begin position="244"/>
        <end position="268"/>
    </location>
</feature>
<feature type="topological domain" description="Extracellular" evidence="3">
    <location>
        <begin position="269"/>
        <end position="287"/>
    </location>
</feature>
<feature type="transmembrane region" description="Helical; Name=7" evidence="3">
    <location>
        <begin position="288"/>
        <end position="311"/>
    </location>
</feature>
<feature type="topological domain" description="Cytoplasmic" evidence="3">
    <location>
        <begin position="312"/>
        <end position="367"/>
    </location>
</feature>
<feature type="modified residue" description="Phosphotyrosine" evidence="1">
    <location>
        <position position="132"/>
    </location>
</feature>
<feature type="modified residue" description="Phosphotyrosine" evidence="1">
    <location>
        <position position="323"/>
    </location>
</feature>
<feature type="modified residue" description="Phosphoserine" evidence="1">
    <location>
        <position position="342"/>
    </location>
</feature>
<feature type="modified residue" description="Phosphothreonine" evidence="1">
    <location>
        <position position="345"/>
    </location>
</feature>
<feature type="modified residue" description="Phosphoserine; by GRK6" evidence="2">
    <location>
        <position position="349"/>
    </location>
</feature>
<feature type="modified residue" description="Phosphoserine; by GRK6" evidence="2">
    <location>
        <position position="351"/>
    </location>
</feature>
<feature type="lipid moiety-binding region" description="S-palmitoyl cysteine" evidence="3">
    <location>
        <position position="327"/>
    </location>
</feature>
<feature type="glycosylation site" description="N-linked (GlcNAc...) asparagine" evidence="3">
    <location>
        <position position="3"/>
    </location>
</feature>
<feature type="glycosylation site" description="N-linked (GlcNAc...) asparagine" evidence="3">
    <location>
        <position position="14"/>
    </location>
</feature>
<feature type="glycosylation site" description="N-linked (GlcNAc...) asparagine" evidence="3">
    <location>
        <position position="183"/>
    </location>
</feature>
<feature type="disulfide bond" evidence="4">
    <location>
        <begin position="106"/>
        <end position="187"/>
    </location>
</feature>
<sequence length="367" mass="41781">MLNLTSQVPEPALNGTLPQSSSCFHSDWWNWLNTIQAPFLWVLFLLAALENIFVLSVFCLHKNSCTVAEIYLGNLAMADLILALGLPFWAITIANHFDWLFGEVLCRVVNTMIYMNLYSSICFLMLVSIDRYLALVKTMSMGRMRGVRWAKLYSLVIWGCTLLLSSPMLAFRTMHEYAAEGHNVTACIIKYPSRSWMVFTNILLNSVGFLLPLSIITYCTVQILQVLRNNEMQKFKEIQTERKATVLVLAVLLLFVVCWLPFQISTFLDTLLRLGVLSGCWDEHAVDVITQISSYVAYSNSGLNPLVYVIVGKRFRKKSREVYRVLCQKGGCMGEPVQMENSMGTLRTSISVERQIHKLQDWAGKKQ</sequence>
<reference key="1">
    <citation type="journal article" date="2001" name="Biol. Reprod.">
        <title>Localization of bradykinin B(2) receptor in the follicles of porcine ovary and increased expression of matrix metalloproteinase-3 and -20 in cultured granulosa cells by bradykinin treatment.</title>
        <authorList>
            <person name="Kimura A."/>
            <person name="Kihara T."/>
            <person name="Ohkura R."/>
            <person name="Ogiwara K."/>
            <person name="Takahashi T."/>
        </authorList>
    </citation>
    <scope>NUCLEOTIDE SEQUENCE [MRNA]</scope>
</reference>
<keyword id="KW-1003">Cell membrane</keyword>
<keyword id="KW-1015">Disulfide bond</keyword>
<keyword id="KW-0297">G-protein coupled receptor</keyword>
<keyword id="KW-0325">Glycoprotein</keyword>
<keyword id="KW-0449">Lipoprotein</keyword>
<keyword id="KW-0472">Membrane</keyword>
<keyword id="KW-0564">Palmitate</keyword>
<keyword id="KW-0597">Phosphoprotein</keyword>
<keyword id="KW-0675">Receptor</keyword>
<keyword id="KW-1185">Reference proteome</keyword>
<keyword id="KW-0807">Transducer</keyword>
<keyword id="KW-0812">Transmembrane</keyword>
<keyword id="KW-1133">Transmembrane helix</keyword>
<gene>
    <name type="primary">BDKRB2</name>
</gene>
<name>BKRB2_PIG</name>
<protein>
    <recommendedName>
        <fullName>B2 bradykinin receptor</fullName>
        <shortName>B2R</shortName>
        <shortName>BK-2 receptor</shortName>
    </recommendedName>
</protein>
<proteinExistence type="evidence at transcript level"/>
<comment type="function">
    <text evidence="2">Receptor for bradykinin. It is associated with G proteins that activate a phosphatidylinositol-calcium second messenger system (By similarity).</text>
</comment>
<comment type="subunit">
    <text evidence="2">Forms a complex with PECAM1 and GNAQ. Interacts with PECAM1 (By similarity).</text>
</comment>
<comment type="subcellular location">
    <subcellularLocation>
        <location evidence="2">Cell membrane</location>
        <topology evidence="3">Multi-pass membrane protein</topology>
    </subcellularLocation>
</comment>
<comment type="similarity">
    <text evidence="4">Belongs to the G-protein coupled receptor 1 family. Bradykinin receptor subfamily. BDKRB2 sub-subfamily.</text>
</comment>
<organism>
    <name type="scientific">Sus scrofa</name>
    <name type="common">Pig</name>
    <dbReference type="NCBI Taxonomy" id="9823"/>
    <lineage>
        <taxon>Eukaryota</taxon>
        <taxon>Metazoa</taxon>
        <taxon>Chordata</taxon>
        <taxon>Craniata</taxon>
        <taxon>Vertebrata</taxon>
        <taxon>Euteleostomi</taxon>
        <taxon>Mammalia</taxon>
        <taxon>Eutheria</taxon>
        <taxon>Laurasiatheria</taxon>
        <taxon>Artiodactyla</taxon>
        <taxon>Suina</taxon>
        <taxon>Suidae</taxon>
        <taxon>Sus</taxon>
    </lineage>
</organism>